<name>RS6_TRIL1</name>
<dbReference type="EMBL" id="CP001089">
    <property type="protein sequence ID" value="ACD96320.1"/>
    <property type="molecule type" value="Genomic_DNA"/>
</dbReference>
<dbReference type="RefSeq" id="WP_012470652.1">
    <property type="nucleotide sequence ID" value="NC_010814.1"/>
</dbReference>
<dbReference type="SMR" id="B3E6H3"/>
<dbReference type="STRING" id="398767.Glov_2607"/>
<dbReference type="KEGG" id="glo:Glov_2607"/>
<dbReference type="eggNOG" id="COG0360">
    <property type="taxonomic scope" value="Bacteria"/>
</dbReference>
<dbReference type="HOGENOM" id="CLU_113441_4_1_7"/>
<dbReference type="OrthoDB" id="9812702at2"/>
<dbReference type="Proteomes" id="UP000002420">
    <property type="component" value="Chromosome"/>
</dbReference>
<dbReference type="GO" id="GO:0022627">
    <property type="term" value="C:cytosolic small ribosomal subunit"/>
    <property type="evidence" value="ECO:0007669"/>
    <property type="project" value="TreeGrafter"/>
</dbReference>
<dbReference type="GO" id="GO:0070181">
    <property type="term" value="F:small ribosomal subunit rRNA binding"/>
    <property type="evidence" value="ECO:0007669"/>
    <property type="project" value="TreeGrafter"/>
</dbReference>
<dbReference type="GO" id="GO:0003735">
    <property type="term" value="F:structural constituent of ribosome"/>
    <property type="evidence" value="ECO:0007669"/>
    <property type="project" value="InterPro"/>
</dbReference>
<dbReference type="GO" id="GO:0006412">
    <property type="term" value="P:translation"/>
    <property type="evidence" value="ECO:0007669"/>
    <property type="project" value="UniProtKB-UniRule"/>
</dbReference>
<dbReference type="CDD" id="cd00473">
    <property type="entry name" value="bS6"/>
    <property type="match status" value="1"/>
</dbReference>
<dbReference type="Gene3D" id="3.30.70.60">
    <property type="match status" value="1"/>
</dbReference>
<dbReference type="HAMAP" id="MF_00360">
    <property type="entry name" value="Ribosomal_bS6"/>
    <property type="match status" value="1"/>
</dbReference>
<dbReference type="InterPro" id="IPR000529">
    <property type="entry name" value="Ribosomal_bS6"/>
</dbReference>
<dbReference type="InterPro" id="IPR035980">
    <property type="entry name" value="Ribosomal_bS6_sf"/>
</dbReference>
<dbReference type="InterPro" id="IPR020814">
    <property type="entry name" value="Ribosomal_S6_plastid/chlpt"/>
</dbReference>
<dbReference type="InterPro" id="IPR014717">
    <property type="entry name" value="Transl_elong_EF1B/ribsomal_bS6"/>
</dbReference>
<dbReference type="NCBIfam" id="TIGR00166">
    <property type="entry name" value="S6"/>
    <property type="match status" value="1"/>
</dbReference>
<dbReference type="PANTHER" id="PTHR21011">
    <property type="entry name" value="MITOCHONDRIAL 28S RIBOSOMAL PROTEIN S6"/>
    <property type="match status" value="1"/>
</dbReference>
<dbReference type="PANTHER" id="PTHR21011:SF1">
    <property type="entry name" value="SMALL RIBOSOMAL SUBUNIT PROTEIN BS6M"/>
    <property type="match status" value="1"/>
</dbReference>
<dbReference type="Pfam" id="PF01250">
    <property type="entry name" value="Ribosomal_S6"/>
    <property type="match status" value="1"/>
</dbReference>
<dbReference type="SUPFAM" id="SSF54995">
    <property type="entry name" value="Ribosomal protein S6"/>
    <property type="match status" value="1"/>
</dbReference>
<proteinExistence type="inferred from homology"/>
<gene>
    <name evidence="1" type="primary">rpsF</name>
    <name type="ordered locus">Glov_2607</name>
</gene>
<reference key="1">
    <citation type="submission" date="2008-05" db="EMBL/GenBank/DDBJ databases">
        <title>Complete sequence of chromosome of Geobacter lovleyi SZ.</title>
        <authorList>
            <consortium name="US DOE Joint Genome Institute"/>
            <person name="Lucas S."/>
            <person name="Copeland A."/>
            <person name="Lapidus A."/>
            <person name="Glavina del Rio T."/>
            <person name="Dalin E."/>
            <person name="Tice H."/>
            <person name="Bruce D."/>
            <person name="Goodwin L."/>
            <person name="Pitluck S."/>
            <person name="Chertkov O."/>
            <person name="Meincke L."/>
            <person name="Brettin T."/>
            <person name="Detter J.C."/>
            <person name="Han C."/>
            <person name="Tapia R."/>
            <person name="Kuske C.R."/>
            <person name="Schmutz J."/>
            <person name="Larimer F."/>
            <person name="Land M."/>
            <person name="Hauser L."/>
            <person name="Kyrpides N."/>
            <person name="Mikhailova N."/>
            <person name="Sung Y."/>
            <person name="Fletcher K.E."/>
            <person name="Ritalahti K.M."/>
            <person name="Loeffler F.E."/>
            <person name="Richardson P."/>
        </authorList>
    </citation>
    <scope>NUCLEOTIDE SEQUENCE [LARGE SCALE GENOMIC DNA]</scope>
    <source>
        <strain>ATCC BAA-1151 / DSM 17278 / SZ</strain>
    </source>
</reference>
<feature type="chain" id="PRO_1000120758" description="Small ribosomal subunit protein bS6">
    <location>
        <begin position="1"/>
        <end position="122"/>
    </location>
</feature>
<keyword id="KW-1185">Reference proteome</keyword>
<keyword id="KW-0687">Ribonucleoprotein</keyword>
<keyword id="KW-0689">Ribosomal protein</keyword>
<keyword id="KW-0694">RNA-binding</keyword>
<keyword id="KW-0699">rRNA-binding</keyword>
<comment type="function">
    <text evidence="1">Binds together with bS18 to 16S ribosomal RNA.</text>
</comment>
<comment type="similarity">
    <text evidence="1">Belongs to the bacterial ribosomal protein bS6 family.</text>
</comment>
<accession>B3E6H3</accession>
<sequence length="122" mass="14041">MRKYETIFILQPDLAEDDVKSVTDKVQDVVASLKGDFHRLDDWGTRKLAYAIRKFPRGRYYYLRFDGGAQLVAELERRLRLDEKVLRFLSVNITDEPEKKVAERKPVIEAAEAPEAAEAAAE</sequence>
<protein>
    <recommendedName>
        <fullName evidence="1">Small ribosomal subunit protein bS6</fullName>
    </recommendedName>
    <alternativeName>
        <fullName evidence="2">30S ribosomal protein S6</fullName>
    </alternativeName>
</protein>
<evidence type="ECO:0000255" key="1">
    <source>
        <dbReference type="HAMAP-Rule" id="MF_00360"/>
    </source>
</evidence>
<evidence type="ECO:0000305" key="2"/>
<organism>
    <name type="scientific">Trichlorobacter lovleyi (strain ATCC BAA-1151 / DSM 17278 / SZ)</name>
    <name type="common">Geobacter lovleyi</name>
    <dbReference type="NCBI Taxonomy" id="398767"/>
    <lineage>
        <taxon>Bacteria</taxon>
        <taxon>Pseudomonadati</taxon>
        <taxon>Thermodesulfobacteriota</taxon>
        <taxon>Desulfuromonadia</taxon>
        <taxon>Geobacterales</taxon>
        <taxon>Geobacteraceae</taxon>
        <taxon>Trichlorobacter</taxon>
    </lineage>
</organism>